<dbReference type="EMBL" id="X05366">
    <property type="protein sequence ID" value="CAA28964.1"/>
    <property type="molecule type" value="Genomic_DNA"/>
</dbReference>
<dbReference type="EMBL" id="D14698">
    <property type="protein sequence ID" value="BAA03524.1"/>
    <property type="molecule type" value="Genomic_DNA"/>
</dbReference>
<dbReference type="PIR" id="A26760">
    <property type="entry name" value="A26760"/>
</dbReference>
<dbReference type="PIR" id="JN0769">
    <property type="entry name" value="JN0769"/>
</dbReference>
<dbReference type="SMR" id="P05493"/>
<dbReference type="IntAct" id="P05493">
    <property type="interactions" value="1"/>
</dbReference>
<dbReference type="GO" id="GO:0005743">
    <property type="term" value="C:mitochondrial inner membrane"/>
    <property type="evidence" value="ECO:0007669"/>
    <property type="project" value="UniProtKB-SubCell"/>
</dbReference>
<dbReference type="GO" id="GO:0045259">
    <property type="term" value="C:proton-transporting ATP synthase complex"/>
    <property type="evidence" value="ECO:0007669"/>
    <property type="project" value="UniProtKB-KW"/>
</dbReference>
<dbReference type="GO" id="GO:0043531">
    <property type="term" value="F:ADP binding"/>
    <property type="evidence" value="ECO:0007669"/>
    <property type="project" value="TreeGrafter"/>
</dbReference>
<dbReference type="GO" id="GO:0005524">
    <property type="term" value="F:ATP binding"/>
    <property type="evidence" value="ECO:0007669"/>
    <property type="project" value="UniProtKB-KW"/>
</dbReference>
<dbReference type="GO" id="GO:0046933">
    <property type="term" value="F:proton-transporting ATP synthase activity, rotational mechanism"/>
    <property type="evidence" value="ECO:0007669"/>
    <property type="project" value="InterPro"/>
</dbReference>
<dbReference type="CDD" id="cd18113">
    <property type="entry name" value="ATP-synt_F1_alpha_C"/>
    <property type="match status" value="1"/>
</dbReference>
<dbReference type="CDD" id="cd18116">
    <property type="entry name" value="ATP-synt_F1_alpha_N"/>
    <property type="match status" value="1"/>
</dbReference>
<dbReference type="CDD" id="cd01132">
    <property type="entry name" value="F1-ATPase_alpha_CD"/>
    <property type="match status" value="1"/>
</dbReference>
<dbReference type="FunFam" id="1.20.150.20:FF:000001">
    <property type="entry name" value="ATP synthase subunit alpha"/>
    <property type="match status" value="1"/>
</dbReference>
<dbReference type="FunFam" id="2.40.30.20:FF:000001">
    <property type="entry name" value="ATP synthase subunit alpha"/>
    <property type="match status" value="1"/>
</dbReference>
<dbReference type="FunFam" id="3.40.50.300:FF:002432">
    <property type="entry name" value="ATP synthase subunit alpha, mitochondrial"/>
    <property type="match status" value="1"/>
</dbReference>
<dbReference type="Gene3D" id="2.40.30.20">
    <property type="match status" value="1"/>
</dbReference>
<dbReference type="Gene3D" id="1.20.150.20">
    <property type="entry name" value="ATP synthase alpha/beta chain, C-terminal domain"/>
    <property type="match status" value="1"/>
</dbReference>
<dbReference type="Gene3D" id="3.40.50.300">
    <property type="entry name" value="P-loop containing nucleotide triphosphate hydrolases"/>
    <property type="match status" value="1"/>
</dbReference>
<dbReference type="HAMAP" id="MF_01346">
    <property type="entry name" value="ATP_synth_alpha_bact"/>
    <property type="match status" value="1"/>
</dbReference>
<dbReference type="InterPro" id="IPR023366">
    <property type="entry name" value="ATP_synth_asu-like_sf"/>
</dbReference>
<dbReference type="InterPro" id="IPR000793">
    <property type="entry name" value="ATP_synth_asu_C"/>
</dbReference>
<dbReference type="InterPro" id="IPR038376">
    <property type="entry name" value="ATP_synth_asu_C_sf"/>
</dbReference>
<dbReference type="InterPro" id="IPR033732">
    <property type="entry name" value="ATP_synth_F1_a_nt-bd_dom"/>
</dbReference>
<dbReference type="InterPro" id="IPR005294">
    <property type="entry name" value="ATP_synth_F1_asu"/>
</dbReference>
<dbReference type="InterPro" id="IPR020003">
    <property type="entry name" value="ATPase_a/bsu_AS"/>
</dbReference>
<dbReference type="InterPro" id="IPR004100">
    <property type="entry name" value="ATPase_F1/V1/A1_a/bsu_N"/>
</dbReference>
<dbReference type="InterPro" id="IPR036121">
    <property type="entry name" value="ATPase_F1/V1/A1_a/bsu_N_sf"/>
</dbReference>
<dbReference type="InterPro" id="IPR000194">
    <property type="entry name" value="ATPase_F1/V1/A1_a/bsu_nucl-bd"/>
</dbReference>
<dbReference type="InterPro" id="IPR027417">
    <property type="entry name" value="P-loop_NTPase"/>
</dbReference>
<dbReference type="NCBIfam" id="TIGR00962">
    <property type="entry name" value="atpA"/>
    <property type="match status" value="1"/>
</dbReference>
<dbReference type="NCBIfam" id="NF009884">
    <property type="entry name" value="PRK13343.1"/>
    <property type="match status" value="1"/>
</dbReference>
<dbReference type="PANTHER" id="PTHR48082">
    <property type="entry name" value="ATP SYNTHASE SUBUNIT ALPHA, MITOCHONDRIAL"/>
    <property type="match status" value="1"/>
</dbReference>
<dbReference type="PANTHER" id="PTHR48082:SF2">
    <property type="entry name" value="ATP SYNTHASE SUBUNIT ALPHA, MITOCHONDRIAL"/>
    <property type="match status" value="1"/>
</dbReference>
<dbReference type="Pfam" id="PF00006">
    <property type="entry name" value="ATP-synt_ab"/>
    <property type="match status" value="1"/>
</dbReference>
<dbReference type="Pfam" id="PF00306">
    <property type="entry name" value="ATP-synt_ab_C"/>
    <property type="match status" value="1"/>
</dbReference>
<dbReference type="Pfam" id="PF02874">
    <property type="entry name" value="ATP-synt_ab_N"/>
    <property type="match status" value="1"/>
</dbReference>
<dbReference type="PIRSF" id="PIRSF039088">
    <property type="entry name" value="F_ATPase_subunit_alpha"/>
    <property type="match status" value="1"/>
</dbReference>
<dbReference type="SUPFAM" id="SSF47917">
    <property type="entry name" value="C-terminal domain of alpha and beta subunits of F1 ATP synthase"/>
    <property type="match status" value="1"/>
</dbReference>
<dbReference type="SUPFAM" id="SSF50615">
    <property type="entry name" value="N-terminal domain of alpha and beta subunits of F1 ATP synthase"/>
    <property type="match status" value="1"/>
</dbReference>
<dbReference type="SUPFAM" id="SSF52540">
    <property type="entry name" value="P-loop containing nucleoside triphosphate hydrolases"/>
    <property type="match status" value="1"/>
</dbReference>
<dbReference type="PROSITE" id="PS00152">
    <property type="entry name" value="ATPASE_ALPHA_BETA"/>
    <property type="match status" value="1"/>
</dbReference>
<accession>P05493</accession>
<keyword id="KW-0066">ATP synthesis</keyword>
<keyword id="KW-0067">ATP-binding</keyword>
<keyword id="KW-0139">CF(1)</keyword>
<keyword id="KW-0375">Hydrogen ion transport</keyword>
<keyword id="KW-0406">Ion transport</keyword>
<keyword id="KW-0472">Membrane</keyword>
<keyword id="KW-0496">Mitochondrion</keyword>
<keyword id="KW-0999">Mitochondrion inner membrane</keyword>
<keyword id="KW-0547">Nucleotide-binding</keyword>
<keyword id="KW-0813">Transport</keyword>
<sequence>MEFSVRAAELTTLLESRITNFYTNFQVDEIGRVVSVGDGIARVYGLNEIQAGELVEFASGVKGIALNLENENVGIVVFGSDTSIKEGDLVKRTGSIVDVPAGKAMLGRVVDALGVPIDGRGALSDHERRRVEVKAPGIIERKSVHEPMQTGLKAVDSLVPIGRGQRELIIGDRQTGKTAIAIDTILNQKQMNSRATSESETLYCVYVAIGQKRSTVAQLVQILSEANALEYSILVAATASDPAPLQFLAPYSGCAMGEYFRDNGMHALIIYDDLSKQAVAYRQMSLLLRRPPGREAFPGDVFYLHSRLLERAAKRSDQTGAGSLTALPVIETQAGDVSAYIPTNVISITDGQICLETELFYRGIRPAINVGLSVSRVGSAAQLKAMKQVCGSLKLELAQYREVAAFAQFGSDLDAATQALLNRGARLTEVLKQPQYAPLPIEKQILVIYAAVNGFCDRMPLDKIAQYERDILSTIKQELLQSLKGGLTGERKIEPDAFLKEKALSLI</sequence>
<gene>
    <name type="primary">ATPA</name>
</gene>
<reference key="1">
    <citation type="journal article" date="1987" name="J. Biochem.">
        <title>Structure and expression of pea mitochondrial F1ATPase alpha-subunit gene and its pseudogene involved in homologous recombination.</title>
        <authorList>
            <person name="Morikami A."/>
            <person name="Nakamura K."/>
        </authorList>
    </citation>
    <scope>NUCLEOTIDE SEQUENCE [GENOMIC DNA]</scope>
    <source>
        <strain>cv. Alaska</strain>
    </source>
</reference>
<reference key="2">
    <citation type="journal article" date="1993" name="Biosci. Biotechnol. Biochem.">
        <title>Transcript map of oppositely oriented pea mitochondrial genes encoding the alpha-subunit and the subunit 9 of F1F0-ATPase complex.</title>
        <authorList>
            <person name="Morikami A."/>
            <person name="Nakamura K."/>
        </authorList>
    </citation>
    <scope>NUCLEOTIDE SEQUENCE [GENOMIC DNA]</scope>
    <source>
        <strain>cv. Alaska</strain>
    </source>
</reference>
<comment type="function">
    <text evidence="1">Mitochondrial membrane ATP synthase (F(1)F(0) ATP synthase or Complex V) produces ATP from ADP in the presence of a proton gradient across the membrane which is generated by electron transport complexes of the respiratory chain. F-type ATPases consist of two structural domains, F(1) - containing the extramembraneous catalytic core, and F(0) - containing the membrane proton channel, linked together by a central stalk and a peripheral stalk. During catalysis, ATP synthesis in the catalytic domain of F(1) is coupled via a rotary mechanism of the central stalk subunits to proton translocation. Subunits alpha and beta form the catalytic core in F(1). Rotation of the central stalk against the surrounding alpha(3)beta(3) subunits leads to hydrolysis of ATP in three separate catalytic sites on the beta subunits. Subunit alpha does not bear the catalytic high-affinity ATP-binding sites (By similarity).</text>
</comment>
<comment type="subunit">
    <text>F-type ATPases have 2 components, CF(1) - the catalytic core - and CF(0) - the membrane proton channel. CF(1) has five subunits: alpha(3), beta(3), gamma(1), delta(1), epsilon(1). CF(0) has three main subunits: a, b and c.</text>
</comment>
<comment type="subcellular location">
    <subcellularLocation>
        <location>Mitochondrion</location>
    </subcellularLocation>
    <subcellularLocation>
        <location>Mitochondrion inner membrane</location>
    </subcellularLocation>
    <text>Peripheral membrane protein.</text>
</comment>
<comment type="similarity">
    <text evidence="2">Belongs to the ATPase alpha/beta chains family.</text>
</comment>
<feature type="chain" id="PRO_0000144404" description="ATP synthase subunit alpha, mitochondrial">
    <location>
        <begin position="1"/>
        <end position="507"/>
    </location>
</feature>
<feature type="binding site" evidence="1">
    <location>
        <begin position="171"/>
        <end position="178"/>
    </location>
    <ligand>
        <name>ATP</name>
        <dbReference type="ChEBI" id="CHEBI:30616"/>
    </ligand>
</feature>
<feature type="site" description="Required for activity" evidence="1">
    <location>
        <position position="373"/>
    </location>
</feature>
<organism>
    <name type="scientific">Pisum sativum</name>
    <name type="common">Garden pea</name>
    <name type="synonym">Lathyrus oleraceus</name>
    <dbReference type="NCBI Taxonomy" id="3888"/>
    <lineage>
        <taxon>Eukaryota</taxon>
        <taxon>Viridiplantae</taxon>
        <taxon>Streptophyta</taxon>
        <taxon>Embryophyta</taxon>
        <taxon>Tracheophyta</taxon>
        <taxon>Spermatophyta</taxon>
        <taxon>Magnoliopsida</taxon>
        <taxon>eudicotyledons</taxon>
        <taxon>Gunneridae</taxon>
        <taxon>Pentapetalae</taxon>
        <taxon>rosids</taxon>
        <taxon>fabids</taxon>
        <taxon>Fabales</taxon>
        <taxon>Fabaceae</taxon>
        <taxon>Papilionoideae</taxon>
        <taxon>50 kb inversion clade</taxon>
        <taxon>NPAAA clade</taxon>
        <taxon>Hologalegina</taxon>
        <taxon>IRL clade</taxon>
        <taxon>Fabeae</taxon>
        <taxon>Pisum</taxon>
    </lineage>
</organism>
<proteinExistence type="inferred from homology"/>
<geneLocation type="mitochondrion"/>
<evidence type="ECO:0000250" key="1"/>
<evidence type="ECO:0000305" key="2"/>
<name>ATPAM_PEA</name>
<protein>
    <recommendedName>
        <fullName>ATP synthase subunit alpha, mitochondrial</fullName>
    </recommendedName>
</protein>